<comment type="subcellular location">
    <subcellularLocation>
        <location evidence="2">Cell inner membrane</location>
        <topology evidence="2">Multi-pass membrane protein</topology>
    </subcellularLocation>
</comment>
<comment type="similarity">
    <text evidence="2">Belongs to the PqiA family.</text>
</comment>
<accession>P44287</accession>
<evidence type="ECO:0000255" key="1"/>
<evidence type="ECO:0000305" key="2"/>
<keyword id="KW-0997">Cell inner membrane</keyword>
<keyword id="KW-1003">Cell membrane</keyword>
<keyword id="KW-0472">Membrane</keyword>
<keyword id="KW-1185">Reference proteome</keyword>
<keyword id="KW-0812">Transmembrane</keyword>
<keyword id="KW-1133">Transmembrane helix</keyword>
<protein>
    <recommendedName>
        <fullName evidence="2">Probable intermembrane transport protein HI_1671</fullName>
    </recommendedName>
</protein>
<sequence>MPKTKLTSPPFKILKCTECDACINVPSILQSNEQAECPRCHHLLASGTRWSLHRCAMIALSILILMPFSLNYPLLSLHLLGIKIDASIWDGIWKMAVGGYEYTAFMIFICAVVMPITFALLVIMLWLAKIFQIKPRSVLLFLGYIKAWVMFDVYLVALGVTIFKVREYATLEINIYLIPFIFTALLTTLLFIKLNLSALWQEFYPECTSVYTKQAVELCPACHYTFTQKSIHYDHQQKICCPRCQSPLNTSDKLKLQATWATLIAGIIMLFPANLLPISGIYLTGALSEDTLISGVISFVKSGSYFVAFVVFFASIFVPISKIFIMLYLLACVHFKWQHSIKWQMRLLHLVHFVGRWSMLDLFVLALMMSLVTRGEIINFTVGPGAFYFGAAVFCTMLSTSQFDSKLIWKIYDREK</sequence>
<dbReference type="EMBL" id="L42023">
    <property type="protein sequence ID" value="AAC23316.1"/>
    <property type="molecule type" value="Genomic_DNA"/>
</dbReference>
<dbReference type="PIR" id="I64039">
    <property type="entry name" value="I64039"/>
</dbReference>
<dbReference type="RefSeq" id="NP_439813.1">
    <property type="nucleotide sequence ID" value="NC_000907.1"/>
</dbReference>
<dbReference type="STRING" id="71421.HI_1671"/>
<dbReference type="EnsemblBacteria" id="AAC23316">
    <property type="protein sequence ID" value="AAC23316"/>
    <property type="gene ID" value="HI_1671"/>
</dbReference>
<dbReference type="KEGG" id="hin:HI_1671"/>
<dbReference type="PATRIC" id="fig|71421.8.peg.1750"/>
<dbReference type="eggNOG" id="COG2995">
    <property type="taxonomic scope" value="Bacteria"/>
</dbReference>
<dbReference type="HOGENOM" id="CLU_041903_0_1_6"/>
<dbReference type="OrthoDB" id="9800207at2"/>
<dbReference type="PhylomeDB" id="P44287"/>
<dbReference type="BioCyc" id="HINF71421:G1GJ1-1686-MONOMER"/>
<dbReference type="Proteomes" id="UP000000579">
    <property type="component" value="Chromosome"/>
</dbReference>
<dbReference type="GO" id="GO:0005886">
    <property type="term" value="C:plasma membrane"/>
    <property type="evidence" value="ECO:0000318"/>
    <property type="project" value="GO_Central"/>
</dbReference>
<dbReference type="GO" id="GO:0061024">
    <property type="term" value="P:membrane organization"/>
    <property type="evidence" value="ECO:0000318"/>
    <property type="project" value="GO_Central"/>
</dbReference>
<dbReference type="InterPro" id="IPR007498">
    <property type="entry name" value="PqiA-like"/>
</dbReference>
<dbReference type="InterPro" id="IPR005219">
    <property type="entry name" value="PqiA-like_proteobact"/>
</dbReference>
<dbReference type="InterPro" id="IPR051800">
    <property type="entry name" value="PqiA-PqiB_transport"/>
</dbReference>
<dbReference type="NCBIfam" id="TIGR00155">
    <property type="entry name" value="pqiA_fam"/>
    <property type="match status" value="1"/>
</dbReference>
<dbReference type="PANTHER" id="PTHR30462">
    <property type="entry name" value="INTERMEMBRANE TRANSPORT PROTEIN PQIB-RELATED"/>
    <property type="match status" value="1"/>
</dbReference>
<dbReference type="PANTHER" id="PTHR30462:SF1">
    <property type="entry name" value="INTERMEMBRANE TRANSPORT PROTEIN YEBS"/>
    <property type="match status" value="1"/>
</dbReference>
<dbReference type="Pfam" id="PF04403">
    <property type="entry name" value="PqiA"/>
    <property type="match status" value="2"/>
</dbReference>
<proteinExistence type="inferred from homology"/>
<name>Y1671_HAEIN</name>
<organism>
    <name type="scientific">Haemophilus influenzae (strain ATCC 51907 / DSM 11121 / KW20 / Rd)</name>
    <dbReference type="NCBI Taxonomy" id="71421"/>
    <lineage>
        <taxon>Bacteria</taxon>
        <taxon>Pseudomonadati</taxon>
        <taxon>Pseudomonadota</taxon>
        <taxon>Gammaproteobacteria</taxon>
        <taxon>Pasteurellales</taxon>
        <taxon>Pasteurellaceae</taxon>
        <taxon>Haemophilus</taxon>
    </lineage>
</organism>
<feature type="chain" id="PRO_0000169054" description="Probable intermembrane transport protein HI_1671">
    <location>
        <begin position="1"/>
        <end position="416"/>
    </location>
</feature>
<feature type="transmembrane region" description="Helical" evidence="1">
    <location>
        <begin position="62"/>
        <end position="82"/>
    </location>
</feature>
<feature type="transmembrane region" description="Helical" evidence="1">
    <location>
        <begin position="107"/>
        <end position="127"/>
    </location>
</feature>
<feature type="transmembrane region" description="Helical" evidence="1">
    <location>
        <begin position="138"/>
        <end position="158"/>
    </location>
</feature>
<feature type="transmembrane region" description="Helical" evidence="1">
    <location>
        <begin position="172"/>
        <end position="192"/>
    </location>
</feature>
<feature type="transmembrane region" description="Helical" evidence="1">
    <location>
        <begin position="263"/>
        <end position="283"/>
    </location>
</feature>
<feature type="transmembrane region" description="Helical" evidence="1">
    <location>
        <begin position="306"/>
        <end position="326"/>
    </location>
</feature>
<feature type="transmembrane region" description="Helical" evidence="1">
    <location>
        <begin position="347"/>
        <end position="367"/>
    </location>
</feature>
<feature type="transmembrane region" description="Helical" evidence="1">
    <location>
        <begin position="377"/>
        <end position="397"/>
    </location>
</feature>
<gene>
    <name type="ordered locus">HI_1671</name>
</gene>
<reference key="1">
    <citation type="journal article" date="1995" name="Science">
        <title>Whole-genome random sequencing and assembly of Haemophilus influenzae Rd.</title>
        <authorList>
            <person name="Fleischmann R.D."/>
            <person name="Adams M.D."/>
            <person name="White O."/>
            <person name="Clayton R.A."/>
            <person name="Kirkness E.F."/>
            <person name="Kerlavage A.R."/>
            <person name="Bult C.J."/>
            <person name="Tomb J.-F."/>
            <person name="Dougherty B.A."/>
            <person name="Merrick J.M."/>
            <person name="McKenney K."/>
            <person name="Sutton G.G."/>
            <person name="FitzHugh W."/>
            <person name="Fields C.A."/>
            <person name="Gocayne J.D."/>
            <person name="Scott J.D."/>
            <person name="Shirley R."/>
            <person name="Liu L.-I."/>
            <person name="Glodek A."/>
            <person name="Kelley J.M."/>
            <person name="Weidman J.F."/>
            <person name="Phillips C.A."/>
            <person name="Spriggs T."/>
            <person name="Hedblom E."/>
            <person name="Cotton M.D."/>
            <person name="Utterback T.R."/>
            <person name="Hanna M.C."/>
            <person name="Nguyen D.T."/>
            <person name="Saudek D.M."/>
            <person name="Brandon R.C."/>
            <person name="Fine L.D."/>
            <person name="Fritchman J.L."/>
            <person name="Fuhrmann J.L."/>
            <person name="Geoghagen N.S.M."/>
            <person name="Gnehm C.L."/>
            <person name="McDonald L.A."/>
            <person name="Small K.V."/>
            <person name="Fraser C.M."/>
            <person name="Smith H.O."/>
            <person name="Venter J.C."/>
        </authorList>
    </citation>
    <scope>NUCLEOTIDE SEQUENCE [LARGE SCALE GENOMIC DNA]</scope>
    <source>
        <strain>ATCC 51907 / DSM 11121 / KW20 / Rd</strain>
    </source>
</reference>